<proteinExistence type="inferred from homology"/>
<dbReference type="EC" id="3.1.1.29" evidence="1"/>
<dbReference type="EMBL" id="CR936503">
    <property type="protein sequence ID" value="CAI55912.1"/>
    <property type="molecule type" value="Genomic_DNA"/>
</dbReference>
<dbReference type="RefSeq" id="WP_011375298.1">
    <property type="nucleotide sequence ID" value="NC_007576.1"/>
</dbReference>
<dbReference type="SMR" id="Q38V72"/>
<dbReference type="STRING" id="314315.LCA_1605"/>
<dbReference type="GeneID" id="57132528"/>
<dbReference type="KEGG" id="lsa:LCA_1605"/>
<dbReference type="eggNOG" id="COG0193">
    <property type="taxonomic scope" value="Bacteria"/>
</dbReference>
<dbReference type="HOGENOM" id="CLU_062456_4_1_9"/>
<dbReference type="OrthoDB" id="9800507at2"/>
<dbReference type="Proteomes" id="UP000002707">
    <property type="component" value="Chromosome"/>
</dbReference>
<dbReference type="GO" id="GO:0005737">
    <property type="term" value="C:cytoplasm"/>
    <property type="evidence" value="ECO:0007669"/>
    <property type="project" value="UniProtKB-SubCell"/>
</dbReference>
<dbReference type="GO" id="GO:0004045">
    <property type="term" value="F:peptidyl-tRNA hydrolase activity"/>
    <property type="evidence" value="ECO:0007669"/>
    <property type="project" value="UniProtKB-UniRule"/>
</dbReference>
<dbReference type="GO" id="GO:0000049">
    <property type="term" value="F:tRNA binding"/>
    <property type="evidence" value="ECO:0007669"/>
    <property type="project" value="UniProtKB-UniRule"/>
</dbReference>
<dbReference type="GO" id="GO:0006515">
    <property type="term" value="P:protein quality control for misfolded or incompletely synthesized proteins"/>
    <property type="evidence" value="ECO:0007669"/>
    <property type="project" value="UniProtKB-UniRule"/>
</dbReference>
<dbReference type="GO" id="GO:0072344">
    <property type="term" value="P:rescue of stalled ribosome"/>
    <property type="evidence" value="ECO:0007669"/>
    <property type="project" value="UniProtKB-UniRule"/>
</dbReference>
<dbReference type="CDD" id="cd00462">
    <property type="entry name" value="PTH"/>
    <property type="match status" value="1"/>
</dbReference>
<dbReference type="FunFam" id="3.40.50.1470:FF:000001">
    <property type="entry name" value="Peptidyl-tRNA hydrolase"/>
    <property type="match status" value="1"/>
</dbReference>
<dbReference type="Gene3D" id="3.40.50.1470">
    <property type="entry name" value="Peptidyl-tRNA hydrolase"/>
    <property type="match status" value="1"/>
</dbReference>
<dbReference type="HAMAP" id="MF_00083">
    <property type="entry name" value="Pept_tRNA_hydro_bact"/>
    <property type="match status" value="1"/>
</dbReference>
<dbReference type="InterPro" id="IPR001328">
    <property type="entry name" value="Pept_tRNA_hydro"/>
</dbReference>
<dbReference type="InterPro" id="IPR018171">
    <property type="entry name" value="Pept_tRNA_hydro_CS"/>
</dbReference>
<dbReference type="InterPro" id="IPR036416">
    <property type="entry name" value="Pept_tRNA_hydro_sf"/>
</dbReference>
<dbReference type="NCBIfam" id="TIGR00447">
    <property type="entry name" value="pth"/>
    <property type="match status" value="1"/>
</dbReference>
<dbReference type="PANTHER" id="PTHR17224">
    <property type="entry name" value="PEPTIDYL-TRNA HYDROLASE"/>
    <property type="match status" value="1"/>
</dbReference>
<dbReference type="PANTHER" id="PTHR17224:SF1">
    <property type="entry name" value="PEPTIDYL-TRNA HYDROLASE"/>
    <property type="match status" value="1"/>
</dbReference>
<dbReference type="Pfam" id="PF01195">
    <property type="entry name" value="Pept_tRNA_hydro"/>
    <property type="match status" value="1"/>
</dbReference>
<dbReference type="SUPFAM" id="SSF53178">
    <property type="entry name" value="Peptidyl-tRNA hydrolase-like"/>
    <property type="match status" value="1"/>
</dbReference>
<dbReference type="PROSITE" id="PS01195">
    <property type="entry name" value="PEPT_TRNA_HYDROL_1"/>
    <property type="match status" value="1"/>
</dbReference>
<dbReference type="PROSITE" id="PS01196">
    <property type="entry name" value="PEPT_TRNA_HYDROL_2"/>
    <property type="match status" value="1"/>
</dbReference>
<accession>Q38V72</accession>
<gene>
    <name evidence="1" type="primary">pth</name>
    <name type="ordered locus">LCA_1605</name>
</gene>
<reference key="1">
    <citation type="journal article" date="2005" name="Nat. Biotechnol.">
        <title>The complete genome sequence of the meat-borne lactic acid bacterium Lactobacillus sakei 23K.</title>
        <authorList>
            <person name="Chaillou S."/>
            <person name="Champomier-Verges M.-C."/>
            <person name="Cornet M."/>
            <person name="Crutz-Le Coq A.-M."/>
            <person name="Dudez A.-M."/>
            <person name="Martin V."/>
            <person name="Beaufils S."/>
            <person name="Darbon-Rongere E."/>
            <person name="Bossy R."/>
            <person name="Loux V."/>
            <person name="Zagorec M."/>
        </authorList>
    </citation>
    <scope>NUCLEOTIDE SEQUENCE [LARGE SCALE GENOMIC DNA]</scope>
    <source>
        <strain>23K</strain>
    </source>
</reference>
<protein>
    <recommendedName>
        <fullName evidence="1">Peptidyl-tRNA hydrolase</fullName>
        <shortName evidence="1">Pth</shortName>
        <ecNumber evidence="1">3.1.1.29</ecNumber>
    </recommendedName>
</protein>
<evidence type="ECO:0000255" key="1">
    <source>
        <dbReference type="HAMAP-Rule" id="MF_00083"/>
    </source>
</evidence>
<name>PTH_LATSS</name>
<keyword id="KW-0963">Cytoplasm</keyword>
<keyword id="KW-0378">Hydrolase</keyword>
<keyword id="KW-1185">Reference proteome</keyword>
<keyword id="KW-0694">RNA-binding</keyword>
<keyword id="KW-0820">tRNA-binding</keyword>
<sequence>MKMIVGLGNPGSKYAKTKHNIGFMVIDQLCEKYNVTLNKHDFEAEYGSFKYEGETVLLVKPLTFMNDSGRSVGPLMSYYQVGIDELLVIQDDMDLTMGKLRLRQKGSAGGHNGIKSIIAHTKSQTFKRLKIGIQHPQKSTVVNWVLTPFDKDGAPVINQAIDQACEAIDDWCQNDDFMKTMNKFN</sequence>
<organism>
    <name type="scientific">Latilactobacillus sakei subsp. sakei (strain 23K)</name>
    <name type="common">Lactobacillus sakei subsp. sakei</name>
    <dbReference type="NCBI Taxonomy" id="314315"/>
    <lineage>
        <taxon>Bacteria</taxon>
        <taxon>Bacillati</taxon>
        <taxon>Bacillota</taxon>
        <taxon>Bacilli</taxon>
        <taxon>Lactobacillales</taxon>
        <taxon>Lactobacillaceae</taxon>
        <taxon>Latilactobacillus</taxon>
    </lineage>
</organism>
<comment type="function">
    <text evidence="1">Hydrolyzes ribosome-free peptidyl-tRNAs (with 1 or more amino acids incorporated), which drop off the ribosome during protein synthesis, or as a result of ribosome stalling.</text>
</comment>
<comment type="function">
    <text evidence="1">Catalyzes the release of premature peptidyl moieties from peptidyl-tRNA molecules trapped in stalled 50S ribosomal subunits, and thus maintains levels of free tRNAs and 50S ribosomes.</text>
</comment>
<comment type="catalytic activity">
    <reaction evidence="1">
        <text>an N-acyl-L-alpha-aminoacyl-tRNA + H2O = an N-acyl-L-amino acid + a tRNA + H(+)</text>
        <dbReference type="Rhea" id="RHEA:54448"/>
        <dbReference type="Rhea" id="RHEA-COMP:10123"/>
        <dbReference type="Rhea" id="RHEA-COMP:13883"/>
        <dbReference type="ChEBI" id="CHEBI:15377"/>
        <dbReference type="ChEBI" id="CHEBI:15378"/>
        <dbReference type="ChEBI" id="CHEBI:59874"/>
        <dbReference type="ChEBI" id="CHEBI:78442"/>
        <dbReference type="ChEBI" id="CHEBI:138191"/>
        <dbReference type="EC" id="3.1.1.29"/>
    </reaction>
</comment>
<comment type="subunit">
    <text evidence="1">Monomer.</text>
</comment>
<comment type="subcellular location">
    <subcellularLocation>
        <location evidence="1">Cytoplasm</location>
    </subcellularLocation>
</comment>
<comment type="similarity">
    <text evidence="1">Belongs to the PTH family.</text>
</comment>
<feature type="chain" id="PRO_0000264051" description="Peptidyl-tRNA hydrolase">
    <location>
        <begin position="1"/>
        <end position="185"/>
    </location>
</feature>
<feature type="active site" description="Proton acceptor" evidence="1">
    <location>
        <position position="19"/>
    </location>
</feature>
<feature type="binding site" evidence="1">
    <location>
        <position position="14"/>
    </location>
    <ligand>
        <name>tRNA</name>
        <dbReference type="ChEBI" id="CHEBI:17843"/>
    </ligand>
</feature>
<feature type="binding site" evidence="1">
    <location>
        <position position="64"/>
    </location>
    <ligand>
        <name>tRNA</name>
        <dbReference type="ChEBI" id="CHEBI:17843"/>
    </ligand>
</feature>
<feature type="binding site" evidence="1">
    <location>
        <position position="66"/>
    </location>
    <ligand>
        <name>tRNA</name>
        <dbReference type="ChEBI" id="CHEBI:17843"/>
    </ligand>
</feature>
<feature type="binding site" evidence="1">
    <location>
        <position position="112"/>
    </location>
    <ligand>
        <name>tRNA</name>
        <dbReference type="ChEBI" id="CHEBI:17843"/>
    </ligand>
</feature>
<feature type="site" description="Discriminates between blocked and unblocked aminoacyl-tRNA" evidence="1">
    <location>
        <position position="9"/>
    </location>
</feature>
<feature type="site" description="Stabilizes the basic form of H active site to accept a proton" evidence="1">
    <location>
        <position position="91"/>
    </location>
</feature>